<protein>
    <recommendedName>
        <fullName evidence="1">ATP synthase subunit alpha</fullName>
        <ecNumber evidence="1">7.1.2.2</ecNumber>
    </recommendedName>
    <alternativeName>
        <fullName evidence="1">ATP synthase F1 sector subunit alpha</fullName>
    </alternativeName>
    <alternativeName>
        <fullName evidence="1">F-ATPase subunit alpha</fullName>
    </alternativeName>
</protein>
<evidence type="ECO:0000255" key="1">
    <source>
        <dbReference type="HAMAP-Rule" id="MF_01346"/>
    </source>
</evidence>
<organism>
    <name type="scientific">Orientia tsutsugamushi (strain Ikeda)</name>
    <name type="common">Rickettsia tsutsugamushi</name>
    <dbReference type="NCBI Taxonomy" id="334380"/>
    <lineage>
        <taxon>Bacteria</taxon>
        <taxon>Pseudomonadati</taxon>
        <taxon>Pseudomonadota</taxon>
        <taxon>Alphaproteobacteria</taxon>
        <taxon>Rickettsiales</taxon>
        <taxon>Rickettsiaceae</taxon>
        <taxon>Rickettsieae</taxon>
        <taxon>Orientia</taxon>
    </lineage>
</organism>
<accession>B3CSS9</accession>
<feature type="chain" id="PRO_1000143417" description="ATP synthase subunit alpha">
    <location>
        <begin position="1"/>
        <end position="512"/>
    </location>
</feature>
<feature type="binding site" evidence="1">
    <location>
        <begin position="169"/>
        <end position="176"/>
    </location>
    <ligand>
        <name>ATP</name>
        <dbReference type="ChEBI" id="CHEBI:30616"/>
    </ligand>
</feature>
<feature type="site" description="Required for activity" evidence="1">
    <location>
        <position position="370"/>
    </location>
</feature>
<sequence>MQLKASEVYEALKKQLEDFDELSELSEVGYVISIGDGIAKVYGLSNAYSGEILQFSTGTKGIVFSLKDNLIEAVVIGSDDQIKQGSQVKRTQTSLKVPTGKELLGRVVDAVGNPIDGKGEFINPTYLDVEVKAPSVMCRDSVNEPMYTGIKAIDALIPIGKGQRELIIGDRQTGKTAIAIDIILNQKRFHLSDQEREKVYCIYVAIGQKRSTVAQLVKKLQETGAMAYTTVVLSSASDAASLQYLAPYTGCAIGEYFRDNGMHALVIYDDLSKHAIAYRQISLLLRRPPAREAYPGDVFYLHSRLLERAAKLNKAKGEGSLTALPIVETQNSDVSAYIPTNIISITDGQIFLESELFYKGTKPALNVGISVSRVGAAAQIKAMKDIAGTVKLELAQYHEMEAFSQFGADLDSSSMQLINRGRRLSELLKQSQYCPFSVEEQIIVLFAGINGYLDKVAVSKVKEFESNMLEHFRIHNPDIMNEIISTKKITEIISSKLHQILQEFVKSIEQYS</sequence>
<gene>
    <name evidence="1" type="primary">atpA</name>
    <name type="ordered locus">OTT_0968</name>
</gene>
<comment type="function">
    <text evidence="1">Produces ATP from ADP in the presence of a proton gradient across the membrane. The alpha chain is a regulatory subunit.</text>
</comment>
<comment type="catalytic activity">
    <reaction evidence="1">
        <text>ATP + H2O + 4 H(+)(in) = ADP + phosphate + 5 H(+)(out)</text>
        <dbReference type="Rhea" id="RHEA:57720"/>
        <dbReference type="ChEBI" id="CHEBI:15377"/>
        <dbReference type="ChEBI" id="CHEBI:15378"/>
        <dbReference type="ChEBI" id="CHEBI:30616"/>
        <dbReference type="ChEBI" id="CHEBI:43474"/>
        <dbReference type="ChEBI" id="CHEBI:456216"/>
        <dbReference type="EC" id="7.1.2.2"/>
    </reaction>
</comment>
<comment type="subunit">
    <text evidence="1">F-type ATPases have 2 components, CF(1) - the catalytic core - and CF(0) - the membrane proton channel. CF(1) has five subunits: alpha(3), beta(3), gamma(1), delta(1), epsilon(1). CF(0) has three main subunits: a(1), b(2) and c(9-12). The alpha and beta chains form an alternating ring which encloses part of the gamma chain. CF(1) is attached to CF(0) by a central stalk formed by the gamma and epsilon chains, while a peripheral stalk is formed by the delta and b chains.</text>
</comment>
<comment type="subcellular location">
    <subcellularLocation>
        <location evidence="1">Cell inner membrane</location>
        <topology evidence="1">Peripheral membrane protein</topology>
    </subcellularLocation>
</comment>
<comment type="similarity">
    <text evidence="1">Belongs to the ATPase alpha/beta chains family.</text>
</comment>
<dbReference type="EC" id="7.1.2.2" evidence="1"/>
<dbReference type="EMBL" id="AP008981">
    <property type="protein sequence ID" value="BAG40426.1"/>
    <property type="molecule type" value="Genomic_DNA"/>
</dbReference>
<dbReference type="RefSeq" id="WP_012461551.1">
    <property type="nucleotide sequence ID" value="NC_010793.1"/>
</dbReference>
<dbReference type="SMR" id="B3CSS9"/>
<dbReference type="KEGG" id="ott:OTT_0968"/>
<dbReference type="HOGENOM" id="CLU_010091_2_1_5"/>
<dbReference type="OrthoDB" id="9803053at2"/>
<dbReference type="Proteomes" id="UP000001033">
    <property type="component" value="Chromosome"/>
</dbReference>
<dbReference type="GO" id="GO:0005886">
    <property type="term" value="C:plasma membrane"/>
    <property type="evidence" value="ECO:0007669"/>
    <property type="project" value="UniProtKB-SubCell"/>
</dbReference>
<dbReference type="GO" id="GO:0045259">
    <property type="term" value="C:proton-transporting ATP synthase complex"/>
    <property type="evidence" value="ECO:0007669"/>
    <property type="project" value="UniProtKB-KW"/>
</dbReference>
<dbReference type="GO" id="GO:0043531">
    <property type="term" value="F:ADP binding"/>
    <property type="evidence" value="ECO:0007669"/>
    <property type="project" value="TreeGrafter"/>
</dbReference>
<dbReference type="GO" id="GO:0005524">
    <property type="term" value="F:ATP binding"/>
    <property type="evidence" value="ECO:0007669"/>
    <property type="project" value="UniProtKB-UniRule"/>
</dbReference>
<dbReference type="GO" id="GO:0046933">
    <property type="term" value="F:proton-transporting ATP synthase activity, rotational mechanism"/>
    <property type="evidence" value="ECO:0007669"/>
    <property type="project" value="UniProtKB-UniRule"/>
</dbReference>
<dbReference type="CDD" id="cd18113">
    <property type="entry name" value="ATP-synt_F1_alpha_C"/>
    <property type="match status" value="1"/>
</dbReference>
<dbReference type="CDD" id="cd18116">
    <property type="entry name" value="ATP-synt_F1_alpha_N"/>
    <property type="match status" value="1"/>
</dbReference>
<dbReference type="CDD" id="cd01132">
    <property type="entry name" value="F1-ATPase_alpha_CD"/>
    <property type="match status" value="1"/>
</dbReference>
<dbReference type="FunFam" id="1.20.150.20:FF:000001">
    <property type="entry name" value="ATP synthase subunit alpha"/>
    <property type="match status" value="1"/>
</dbReference>
<dbReference type="FunFam" id="3.40.50.300:FF:002432">
    <property type="entry name" value="ATP synthase subunit alpha, mitochondrial"/>
    <property type="match status" value="1"/>
</dbReference>
<dbReference type="Gene3D" id="2.40.30.20">
    <property type="match status" value="1"/>
</dbReference>
<dbReference type="Gene3D" id="1.20.150.20">
    <property type="entry name" value="ATP synthase alpha/beta chain, C-terminal domain"/>
    <property type="match status" value="1"/>
</dbReference>
<dbReference type="Gene3D" id="3.40.50.300">
    <property type="entry name" value="P-loop containing nucleotide triphosphate hydrolases"/>
    <property type="match status" value="1"/>
</dbReference>
<dbReference type="HAMAP" id="MF_01346">
    <property type="entry name" value="ATP_synth_alpha_bact"/>
    <property type="match status" value="1"/>
</dbReference>
<dbReference type="InterPro" id="IPR023366">
    <property type="entry name" value="ATP_synth_asu-like_sf"/>
</dbReference>
<dbReference type="InterPro" id="IPR000793">
    <property type="entry name" value="ATP_synth_asu_C"/>
</dbReference>
<dbReference type="InterPro" id="IPR038376">
    <property type="entry name" value="ATP_synth_asu_C_sf"/>
</dbReference>
<dbReference type="InterPro" id="IPR033732">
    <property type="entry name" value="ATP_synth_F1_a_nt-bd_dom"/>
</dbReference>
<dbReference type="InterPro" id="IPR005294">
    <property type="entry name" value="ATP_synth_F1_asu"/>
</dbReference>
<dbReference type="InterPro" id="IPR020003">
    <property type="entry name" value="ATPase_a/bsu_AS"/>
</dbReference>
<dbReference type="InterPro" id="IPR004100">
    <property type="entry name" value="ATPase_F1/V1/A1_a/bsu_N"/>
</dbReference>
<dbReference type="InterPro" id="IPR036121">
    <property type="entry name" value="ATPase_F1/V1/A1_a/bsu_N_sf"/>
</dbReference>
<dbReference type="InterPro" id="IPR000194">
    <property type="entry name" value="ATPase_F1/V1/A1_a/bsu_nucl-bd"/>
</dbReference>
<dbReference type="InterPro" id="IPR027417">
    <property type="entry name" value="P-loop_NTPase"/>
</dbReference>
<dbReference type="NCBIfam" id="TIGR00962">
    <property type="entry name" value="atpA"/>
    <property type="match status" value="1"/>
</dbReference>
<dbReference type="NCBIfam" id="NF009884">
    <property type="entry name" value="PRK13343.1"/>
    <property type="match status" value="1"/>
</dbReference>
<dbReference type="PANTHER" id="PTHR48082">
    <property type="entry name" value="ATP SYNTHASE SUBUNIT ALPHA, MITOCHONDRIAL"/>
    <property type="match status" value="1"/>
</dbReference>
<dbReference type="PANTHER" id="PTHR48082:SF2">
    <property type="entry name" value="ATP SYNTHASE SUBUNIT ALPHA, MITOCHONDRIAL"/>
    <property type="match status" value="1"/>
</dbReference>
<dbReference type="Pfam" id="PF00006">
    <property type="entry name" value="ATP-synt_ab"/>
    <property type="match status" value="1"/>
</dbReference>
<dbReference type="Pfam" id="PF00306">
    <property type="entry name" value="ATP-synt_ab_C"/>
    <property type="match status" value="1"/>
</dbReference>
<dbReference type="Pfam" id="PF02874">
    <property type="entry name" value="ATP-synt_ab_N"/>
    <property type="match status" value="1"/>
</dbReference>
<dbReference type="PIRSF" id="PIRSF039088">
    <property type="entry name" value="F_ATPase_subunit_alpha"/>
    <property type="match status" value="1"/>
</dbReference>
<dbReference type="SUPFAM" id="SSF47917">
    <property type="entry name" value="C-terminal domain of alpha and beta subunits of F1 ATP synthase"/>
    <property type="match status" value="1"/>
</dbReference>
<dbReference type="SUPFAM" id="SSF50615">
    <property type="entry name" value="N-terminal domain of alpha and beta subunits of F1 ATP synthase"/>
    <property type="match status" value="1"/>
</dbReference>
<dbReference type="SUPFAM" id="SSF52540">
    <property type="entry name" value="P-loop containing nucleoside triphosphate hydrolases"/>
    <property type="match status" value="1"/>
</dbReference>
<dbReference type="PROSITE" id="PS00152">
    <property type="entry name" value="ATPASE_ALPHA_BETA"/>
    <property type="match status" value="1"/>
</dbReference>
<reference key="1">
    <citation type="journal article" date="2008" name="DNA Res.">
        <title>The whole-genome sequencing of the obligate intracellular bacterium Orientia tsutsugamushi revealed massive gene amplification during reductive genome evolution.</title>
        <authorList>
            <person name="Nakayama K."/>
            <person name="Yamashita A."/>
            <person name="Kurokawa K."/>
            <person name="Morimoto T."/>
            <person name="Ogawa M."/>
            <person name="Fukuhara M."/>
            <person name="Urakami H."/>
            <person name="Ohnishi M."/>
            <person name="Uchiyama I."/>
            <person name="Ogura Y."/>
            <person name="Ooka T."/>
            <person name="Oshima K."/>
            <person name="Tamura A."/>
            <person name="Hattori M."/>
            <person name="Hayashi T."/>
        </authorList>
    </citation>
    <scope>NUCLEOTIDE SEQUENCE [LARGE SCALE GENOMIC DNA]</scope>
    <source>
        <strain>Ikeda</strain>
    </source>
</reference>
<proteinExistence type="inferred from homology"/>
<keyword id="KW-0066">ATP synthesis</keyword>
<keyword id="KW-0067">ATP-binding</keyword>
<keyword id="KW-0997">Cell inner membrane</keyword>
<keyword id="KW-1003">Cell membrane</keyword>
<keyword id="KW-0139">CF(1)</keyword>
<keyword id="KW-0375">Hydrogen ion transport</keyword>
<keyword id="KW-0406">Ion transport</keyword>
<keyword id="KW-0472">Membrane</keyword>
<keyword id="KW-0547">Nucleotide-binding</keyword>
<keyword id="KW-1278">Translocase</keyword>
<keyword id="KW-0813">Transport</keyword>
<name>ATPA_ORITI</name>